<accession>Q5SHN9</accession>
<gene>
    <name type="primary">rplD</name>
    <name type="ordered locus">TTHA1691</name>
</gene>
<dbReference type="EMBL" id="U36480">
    <property type="protein sequence ID" value="AAA97862.1"/>
    <property type="molecule type" value="Genomic_DNA"/>
</dbReference>
<dbReference type="EMBL" id="AP008226">
    <property type="protein sequence ID" value="BAD71514.1"/>
    <property type="molecule type" value="Genomic_DNA"/>
</dbReference>
<dbReference type="RefSeq" id="YP_144957.2">
    <property type="nucleotide sequence ID" value="NC_006461.1"/>
</dbReference>
<dbReference type="PDB" id="1VVJ">
    <property type="method" value="X-ray"/>
    <property type="resolution" value="3.44 A"/>
    <property type="chains" value="RF/YF=1-210"/>
</dbReference>
<dbReference type="PDB" id="1VY4">
    <property type="method" value="X-ray"/>
    <property type="resolution" value="2.60 A"/>
    <property type="chains" value="BF/DF=1-210"/>
</dbReference>
<dbReference type="PDB" id="1VY5">
    <property type="method" value="X-ray"/>
    <property type="resolution" value="2.55 A"/>
    <property type="chains" value="BF/DF=1-210"/>
</dbReference>
<dbReference type="PDB" id="1VY6">
    <property type="method" value="X-ray"/>
    <property type="resolution" value="2.90 A"/>
    <property type="chains" value="BF/DF=1-210"/>
</dbReference>
<dbReference type="PDB" id="1VY7">
    <property type="method" value="X-ray"/>
    <property type="resolution" value="2.80 A"/>
    <property type="chains" value="BF/DF=1-210"/>
</dbReference>
<dbReference type="PDB" id="4L47">
    <property type="method" value="X-ray"/>
    <property type="resolution" value="3.22 A"/>
    <property type="chains" value="RF/YF=1-210"/>
</dbReference>
<dbReference type="PDB" id="4L71">
    <property type="method" value="X-ray"/>
    <property type="resolution" value="3.90 A"/>
    <property type="chains" value="RF/YF=1-210"/>
</dbReference>
<dbReference type="PDB" id="4LEL">
    <property type="method" value="X-ray"/>
    <property type="resolution" value="3.90 A"/>
    <property type="chains" value="RF/YF=1-210"/>
</dbReference>
<dbReference type="PDB" id="4LFZ">
    <property type="method" value="X-ray"/>
    <property type="resolution" value="3.92 A"/>
    <property type="chains" value="RF/YF=1-210"/>
</dbReference>
<dbReference type="PDB" id="4LNT">
    <property type="method" value="X-ray"/>
    <property type="resolution" value="2.94 A"/>
    <property type="chains" value="RF/YF=1-210"/>
</dbReference>
<dbReference type="PDB" id="4LSK">
    <property type="method" value="X-ray"/>
    <property type="resolution" value="3.48 A"/>
    <property type="chains" value="RF/YF=1-210"/>
</dbReference>
<dbReference type="PDB" id="4LT8">
    <property type="method" value="X-ray"/>
    <property type="resolution" value="3.14 A"/>
    <property type="chains" value="RF/YF=1-210"/>
</dbReference>
<dbReference type="PDB" id="4P6F">
    <property type="method" value="X-ray"/>
    <property type="resolution" value="3.60 A"/>
    <property type="chains" value="RF/YF=1-210"/>
</dbReference>
<dbReference type="PDB" id="4P70">
    <property type="method" value="X-ray"/>
    <property type="resolution" value="3.68 A"/>
    <property type="chains" value="RF/YF=1-210"/>
</dbReference>
<dbReference type="PDB" id="4TUA">
    <property type="method" value="X-ray"/>
    <property type="resolution" value="3.60 A"/>
    <property type="chains" value="RF/YF=1-210"/>
</dbReference>
<dbReference type="PDB" id="4TUB">
    <property type="method" value="X-ray"/>
    <property type="resolution" value="3.60 A"/>
    <property type="chains" value="RF/YF=1-210"/>
</dbReference>
<dbReference type="PDB" id="4TUC">
    <property type="method" value="X-ray"/>
    <property type="resolution" value="3.60 A"/>
    <property type="chains" value="RF/YF=1-210"/>
</dbReference>
<dbReference type="PDB" id="4TUD">
    <property type="method" value="X-ray"/>
    <property type="resolution" value="3.60 A"/>
    <property type="chains" value="RF/YF=1-210"/>
</dbReference>
<dbReference type="PDB" id="4TUE">
    <property type="method" value="X-ray"/>
    <property type="resolution" value="3.50 A"/>
    <property type="chains" value="RF/YF=1-210"/>
</dbReference>
<dbReference type="PDB" id="4V42">
    <property type="method" value="X-ray"/>
    <property type="resolution" value="5.50 A"/>
    <property type="chains" value="BF=1-210"/>
</dbReference>
<dbReference type="PDB" id="4V4P">
    <property type="method" value="X-ray"/>
    <property type="resolution" value="5.50 A"/>
    <property type="chains" value="BF=1-210"/>
</dbReference>
<dbReference type="PDB" id="4V4X">
    <property type="method" value="X-ray"/>
    <property type="resolution" value="5.00 A"/>
    <property type="chains" value="BF=1-210"/>
</dbReference>
<dbReference type="PDB" id="4V4Y">
    <property type="method" value="X-ray"/>
    <property type="resolution" value="5.50 A"/>
    <property type="chains" value="BF=1-210"/>
</dbReference>
<dbReference type="PDB" id="4V4Z">
    <property type="method" value="X-ray"/>
    <property type="resolution" value="4.51 A"/>
    <property type="chains" value="BF=1-210"/>
</dbReference>
<dbReference type="PDB" id="4V51">
    <property type="method" value="X-ray"/>
    <property type="resolution" value="2.80 A"/>
    <property type="chains" value="BF/DF=1-210"/>
</dbReference>
<dbReference type="PDB" id="4V5A">
    <property type="method" value="X-ray"/>
    <property type="resolution" value="3.50 A"/>
    <property type="chains" value="BF/DF=1-210"/>
</dbReference>
<dbReference type="PDB" id="4V5C">
    <property type="method" value="X-ray"/>
    <property type="resolution" value="3.30 A"/>
    <property type="chains" value="BF/DF=1-210"/>
</dbReference>
<dbReference type="PDB" id="4V5D">
    <property type="method" value="X-ray"/>
    <property type="resolution" value="3.50 A"/>
    <property type="chains" value="BF/DF=1-210"/>
</dbReference>
<dbReference type="PDB" id="4V5E">
    <property type="method" value="X-ray"/>
    <property type="resolution" value="3.45 A"/>
    <property type="chains" value="BF/DF=1-210"/>
</dbReference>
<dbReference type="PDB" id="4V5F">
    <property type="method" value="X-ray"/>
    <property type="resolution" value="3.60 A"/>
    <property type="chains" value="BF/DF=1-210"/>
</dbReference>
<dbReference type="PDB" id="4V5G">
    <property type="method" value="X-ray"/>
    <property type="resolution" value="3.60 A"/>
    <property type="chains" value="BF/DF=1-210"/>
</dbReference>
<dbReference type="PDB" id="4V5J">
    <property type="method" value="X-ray"/>
    <property type="resolution" value="3.10 A"/>
    <property type="chains" value="BF/DF=1-210"/>
</dbReference>
<dbReference type="PDB" id="4V5K">
    <property type="method" value="X-ray"/>
    <property type="resolution" value="3.20 A"/>
    <property type="chains" value="BF/DF=1-210"/>
</dbReference>
<dbReference type="PDB" id="4V5L">
    <property type="method" value="X-ray"/>
    <property type="resolution" value="3.10 A"/>
    <property type="chains" value="BF=1-210"/>
</dbReference>
<dbReference type="PDB" id="4V5M">
    <property type="method" value="EM"/>
    <property type="resolution" value="7.80 A"/>
    <property type="chains" value="BF=1-210"/>
</dbReference>
<dbReference type="PDB" id="4V5N">
    <property type="method" value="EM"/>
    <property type="resolution" value="7.60 A"/>
    <property type="chains" value="BF=1-210"/>
</dbReference>
<dbReference type="PDB" id="4V5P">
    <property type="method" value="X-ray"/>
    <property type="resolution" value="3.10 A"/>
    <property type="chains" value="BF/DF=1-210"/>
</dbReference>
<dbReference type="PDB" id="4V5Q">
    <property type="method" value="X-ray"/>
    <property type="resolution" value="3.10 A"/>
    <property type="chains" value="BF/DF=1-210"/>
</dbReference>
<dbReference type="PDB" id="4V5R">
    <property type="method" value="X-ray"/>
    <property type="resolution" value="3.10 A"/>
    <property type="chains" value="BF/DF=1-210"/>
</dbReference>
<dbReference type="PDB" id="4V5S">
    <property type="method" value="X-ray"/>
    <property type="resolution" value="3.10 A"/>
    <property type="chains" value="BF/DF=1-210"/>
</dbReference>
<dbReference type="PDB" id="4V68">
    <property type="method" value="EM"/>
    <property type="resolution" value="6.40 A"/>
    <property type="chains" value="BF=1-208"/>
</dbReference>
<dbReference type="PDB" id="4V6A">
    <property type="method" value="X-ray"/>
    <property type="resolution" value="3.10 A"/>
    <property type="chains" value="BF/DF=1-210"/>
</dbReference>
<dbReference type="PDB" id="4V6F">
    <property type="method" value="X-ray"/>
    <property type="resolution" value="3.10 A"/>
    <property type="chains" value="AF/DF=1-210"/>
</dbReference>
<dbReference type="PDB" id="4V6G">
    <property type="method" value="X-ray"/>
    <property type="resolution" value="3.50 A"/>
    <property type="chains" value="BF/DF=1-210"/>
</dbReference>
<dbReference type="PDB" id="4V7J">
    <property type="method" value="X-ray"/>
    <property type="resolution" value="3.30 A"/>
    <property type="chains" value="AF/BF=1-210"/>
</dbReference>
<dbReference type="PDB" id="4V7K">
    <property type="method" value="X-ray"/>
    <property type="resolution" value="3.60 A"/>
    <property type="chains" value="AF/BF=1-210"/>
</dbReference>
<dbReference type="PDB" id="4V7L">
    <property type="method" value="X-ray"/>
    <property type="resolution" value="3.00 A"/>
    <property type="chains" value="BF/DF=1-210"/>
</dbReference>
<dbReference type="PDB" id="4V7M">
    <property type="method" value="X-ray"/>
    <property type="resolution" value="3.45 A"/>
    <property type="chains" value="BF/DF=1-210"/>
</dbReference>
<dbReference type="PDB" id="4V7W">
    <property type="method" value="X-ray"/>
    <property type="resolution" value="3.00 A"/>
    <property type="chains" value="BF/DF=1-210"/>
</dbReference>
<dbReference type="PDB" id="4V7X">
    <property type="method" value="X-ray"/>
    <property type="resolution" value="3.00 A"/>
    <property type="chains" value="BF/DF=1-210"/>
</dbReference>
<dbReference type="PDB" id="4V7Y">
    <property type="method" value="X-ray"/>
    <property type="resolution" value="3.00 A"/>
    <property type="chains" value="BF/DF=1-210"/>
</dbReference>
<dbReference type="PDB" id="4V7Z">
    <property type="method" value="X-ray"/>
    <property type="resolution" value="3.10 A"/>
    <property type="chains" value="BF/DF=1-210"/>
</dbReference>
<dbReference type="PDB" id="4V87">
    <property type="method" value="X-ray"/>
    <property type="resolution" value="3.10 A"/>
    <property type="chains" value="AF/DF=1-208"/>
</dbReference>
<dbReference type="PDB" id="4V8A">
    <property type="method" value="X-ray"/>
    <property type="resolution" value="3.20 A"/>
    <property type="chains" value="AF/BF=6-210"/>
</dbReference>
<dbReference type="PDB" id="4V8B">
    <property type="method" value="X-ray"/>
    <property type="resolution" value="3.00 A"/>
    <property type="chains" value="BF/DF=1-210"/>
</dbReference>
<dbReference type="PDB" id="4V8C">
    <property type="method" value="X-ray"/>
    <property type="resolution" value="3.30 A"/>
    <property type="chains" value="AF/BF=1-210"/>
</dbReference>
<dbReference type="PDB" id="4V8D">
    <property type="method" value="X-ray"/>
    <property type="resolution" value="3.00 A"/>
    <property type="chains" value="BF/DF=1-210"/>
</dbReference>
<dbReference type="PDB" id="4V8E">
    <property type="method" value="X-ray"/>
    <property type="resolution" value="3.30 A"/>
    <property type="chains" value="AF/CF=1-210"/>
</dbReference>
<dbReference type="PDB" id="4V8F">
    <property type="method" value="X-ray"/>
    <property type="resolution" value="3.30 A"/>
    <property type="chains" value="AF/DF=1-210"/>
</dbReference>
<dbReference type="PDB" id="4V8G">
    <property type="method" value="X-ray"/>
    <property type="resolution" value="3.00 A"/>
    <property type="chains" value="BF/DF=1-210"/>
</dbReference>
<dbReference type="PDB" id="4V8H">
    <property type="method" value="X-ray"/>
    <property type="resolution" value="3.10 A"/>
    <property type="chains" value="BF/DF=1-210"/>
</dbReference>
<dbReference type="PDB" id="4V8I">
    <property type="method" value="X-ray"/>
    <property type="resolution" value="2.70 A"/>
    <property type="chains" value="BF/DF=1-210"/>
</dbReference>
<dbReference type="PDB" id="4V8J">
    <property type="method" value="X-ray"/>
    <property type="resolution" value="3.90 A"/>
    <property type="chains" value="BF/DF=1-210"/>
</dbReference>
<dbReference type="PDB" id="4V8N">
    <property type="method" value="X-ray"/>
    <property type="resolution" value="3.10 A"/>
    <property type="chains" value="BF/DF=1-210"/>
</dbReference>
<dbReference type="PDB" id="4V8O">
    <property type="method" value="X-ray"/>
    <property type="resolution" value="3.80 A"/>
    <property type="chains" value="BF=1-210"/>
</dbReference>
<dbReference type="PDB" id="4V8Q">
    <property type="method" value="X-ray"/>
    <property type="resolution" value="3.10 A"/>
    <property type="chains" value="AF=1-210"/>
</dbReference>
<dbReference type="PDB" id="4V8U">
    <property type="method" value="X-ray"/>
    <property type="resolution" value="3.70 A"/>
    <property type="chains" value="BF/DF=1-210"/>
</dbReference>
<dbReference type="PDB" id="4V8X">
    <property type="method" value="X-ray"/>
    <property type="resolution" value="3.35 A"/>
    <property type="chains" value="BF/DF=1-210"/>
</dbReference>
<dbReference type="PDB" id="4V90">
    <property type="method" value="X-ray"/>
    <property type="resolution" value="2.95 A"/>
    <property type="chains" value="BF=1-210"/>
</dbReference>
<dbReference type="PDB" id="4V95">
    <property type="method" value="X-ray"/>
    <property type="resolution" value="3.20 A"/>
    <property type="chains" value="BF/DF=1-210"/>
</dbReference>
<dbReference type="PDB" id="4V97">
    <property type="method" value="X-ray"/>
    <property type="resolution" value="3.52 A"/>
    <property type="chains" value="BF/DF=1-210"/>
</dbReference>
<dbReference type="PDB" id="4V9A">
    <property type="method" value="X-ray"/>
    <property type="resolution" value="3.30 A"/>
    <property type="chains" value="BF/DF=1-210"/>
</dbReference>
<dbReference type="PDB" id="4V9B">
    <property type="method" value="X-ray"/>
    <property type="resolution" value="3.10 A"/>
    <property type="chains" value="BF/DF=1-210"/>
</dbReference>
<dbReference type="PDB" id="4V9H">
    <property type="method" value="X-ray"/>
    <property type="resolution" value="2.86 A"/>
    <property type="chains" value="BF=1-210"/>
</dbReference>
<dbReference type="PDB" id="4V9I">
    <property type="method" value="X-ray"/>
    <property type="resolution" value="3.30 A"/>
    <property type="chains" value="BF/DF=1-207"/>
</dbReference>
<dbReference type="PDB" id="4V9R">
    <property type="method" value="X-ray"/>
    <property type="resolution" value="3.00 A"/>
    <property type="chains" value="BF/DF=1-210"/>
</dbReference>
<dbReference type="PDB" id="4V9S">
    <property type="method" value="X-ray"/>
    <property type="resolution" value="3.10 A"/>
    <property type="chains" value="BF/DF=1-210"/>
</dbReference>
<dbReference type="PDB" id="4W2E">
    <property type="method" value="X-ray"/>
    <property type="resolution" value="2.90 A"/>
    <property type="chains" value="F=6-210"/>
</dbReference>
<dbReference type="PDB" id="4W2F">
    <property type="method" value="X-ray"/>
    <property type="resolution" value="2.40 A"/>
    <property type="chains" value="BF/DF=1-210"/>
</dbReference>
<dbReference type="PDB" id="4W2G">
    <property type="method" value="X-ray"/>
    <property type="resolution" value="2.55 A"/>
    <property type="chains" value="BF/DF=1-210"/>
</dbReference>
<dbReference type="PDB" id="4W2H">
    <property type="method" value="X-ray"/>
    <property type="resolution" value="2.70 A"/>
    <property type="chains" value="BF/DF=1-210"/>
</dbReference>
<dbReference type="PDB" id="4W2I">
    <property type="method" value="X-ray"/>
    <property type="resolution" value="2.70 A"/>
    <property type="chains" value="BF/DF=1-210"/>
</dbReference>
<dbReference type="PDB" id="4W4G">
    <property type="method" value="X-ray"/>
    <property type="resolution" value="3.30 A"/>
    <property type="chains" value="RF/YF=1-210"/>
</dbReference>
<dbReference type="PDB" id="4WPO">
    <property type="method" value="X-ray"/>
    <property type="resolution" value="2.80 A"/>
    <property type="chains" value="AF/CF=1-210"/>
</dbReference>
<dbReference type="PDB" id="4WQ1">
    <property type="method" value="X-ray"/>
    <property type="resolution" value="3.10 A"/>
    <property type="chains" value="31=6-207, 39=1-210"/>
</dbReference>
<dbReference type="PDB" id="4WQF">
    <property type="method" value="X-ray"/>
    <property type="resolution" value="2.80 A"/>
    <property type="chains" value="AF/CF=1-210"/>
</dbReference>
<dbReference type="PDB" id="4WQR">
    <property type="method" value="X-ray"/>
    <property type="resolution" value="3.15 A"/>
    <property type="chains" value="31/39=1-210"/>
</dbReference>
<dbReference type="PDB" id="4WQU">
    <property type="method" value="X-ray"/>
    <property type="resolution" value="2.80 A"/>
    <property type="chains" value="AF/CF=1-210"/>
</dbReference>
<dbReference type="PDB" id="4WQY">
    <property type="method" value="X-ray"/>
    <property type="resolution" value="2.80 A"/>
    <property type="chains" value="AF/CF=1-210"/>
</dbReference>
<dbReference type="PDB" id="4WR6">
    <property type="method" value="X-ray"/>
    <property type="resolution" value="3.05 A"/>
    <property type="chains" value="31/39=1-210"/>
</dbReference>
<dbReference type="PDB" id="4WRA">
    <property type="method" value="X-ray"/>
    <property type="resolution" value="3.05 A"/>
    <property type="chains" value="31/39=1-210"/>
</dbReference>
<dbReference type="PDB" id="4WRO">
    <property type="method" value="X-ray"/>
    <property type="resolution" value="3.05 A"/>
    <property type="chains" value="31=1-210"/>
</dbReference>
<dbReference type="PDB" id="4WSD">
    <property type="method" value="X-ray"/>
    <property type="resolution" value="2.95 A"/>
    <property type="chains" value="31/39=1-210"/>
</dbReference>
<dbReference type="PDB" id="4WSM">
    <property type="method" value="X-ray"/>
    <property type="resolution" value="3.30 A"/>
    <property type="chains" value="31/39=1-210"/>
</dbReference>
<dbReference type="PDB" id="4WT1">
    <property type="method" value="X-ray"/>
    <property type="resolution" value="3.05 A"/>
    <property type="chains" value="31/39=1-210"/>
</dbReference>
<dbReference type="PDB" id="4WT8">
    <property type="method" value="X-ray"/>
    <property type="resolution" value="3.40 A"/>
    <property type="chains" value="CD/DD=1-207"/>
</dbReference>
<dbReference type="PDB" id="4WU1">
    <property type="method" value="X-ray"/>
    <property type="resolution" value="3.20 A"/>
    <property type="chains" value="31/39=1-210"/>
</dbReference>
<dbReference type="PDB" id="4WZD">
    <property type="method" value="X-ray"/>
    <property type="resolution" value="3.10 A"/>
    <property type="chains" value="31/39=1-210"/>
</dbReference>
<dbReference type="PDB" id="4WZO">
    <property type="method" value="X-ray"/>
    <property type="resolution" value="3.30 A"/>
    <property type="chains" value="31/39=1-210"/>
</dbReference>
<dbReference type="PDB" id="4Y4O">
    <property type="method" value="X-ray"/>
    <property type="resolution" value="2.30 A"/>
    <property type="chains" value="1F/2F=1-210"/>
</dbReference>
<dbReference type="PDB" id="4Y4P">
    <property type="method" value="X-ray"/>
    <property type="resolution" value="2.50 A"/>
    <property type="chains" value="1F/2F=1-210"/>
</dbReference>
<dbReference type="PDB" id="4YPB">
    <property type="method" value="X-ray"/>
    <property type="resolution" value="3.40 A"/>
    <property type="chains" value="RF/YF=1-210"/>
</dbReference>
<dbReference type="PDB" id="4YZV">
    <property type="method" value="X-ray"/>
    <property type="resolution" value="3.10 A"/>
    <property type="chains" value="RF/YF=1-210"/>
</dbReference>
<dbReference type="PDB" id="4Z3S">
    <property type="method" value="X-ray"/>
    <property type="resolution" value="2.65 A"/>
    <property type="chains" value="1F/2F=1-210"/>
</dbReference>
<dbReference type="PDB" id="4Z8C">
    <property type="method" value="X-ray"/>
    <property type="resolution" value="2.90 A"/>
    <property type="chains" value="1F/2F=1-210"/>
</dbReference>
<dbReference type="PDB" id="4ZER">
    <property type="method" value="X-ray"/>
    <property type="resolution" value="3.10 A"/>
    <property type="chains" value="1F/2F=6-208"/>
</dbReference>
<dbReference type="PDB" id="4ZSN">
    <property type="method" value="X-ray"/>
    <property type="resolution" value="3.60 A"/>
    <property type="chains" value="RF/YF=1-210"/>
</dbReference>
<dbReference type="PDB" id="5A9Z">
    <property type="method" value="EM"/>
    <property type="resolution" value="4.70 A"/>
    <property type="chains" value="AF=3-210"/>
</dbReference>
<dbReference type="PDB" id="5AA0">
    <property type="method" value="EM"/>
    <property type="resolution" value="5.00 A"/>
    <property type="chains" value="AF=3-210"/>
</dbReference>
<dbReference type="PDB" id="5CZP">
    <property type="method" value="X-ray"/>
    <property type="resolution" value="3.30 A"/>
    <property type="chains" value="RF/YF=1-210"/>
</dbReference>
<dbReference type="PDB" id="5D8B">
    <property type="method" value="X-ray"/>
    <property type="resolution" value="3.63 A"/>
    <property type="chains" value="C/YA=7-210"/>
</dbReference>
<dbReference type="PDB" id="5DFE">
    <property type="method" value="X-ray"/>
    <property type="resolution" value="3.10 A"/>
    <property type="chains" value="RF/YF=1-210"/>
</dbReference>
<dbReference type="PDB" id="5DOX">
    <property type="method" value="X-ray"/>
    <property type="resolution" value="3.10 A"/>
    <property type="chains" value="1F/2F=1-210"/>
</dbReference>
<dbReference type="PDB" id="5DOY">
    <property type="method" value="X-ray"/>
    <property type="resolution" value="2.60 A"/>
    <property type="chains" value="1F/2F=1-210"/>
</dbReference>
<dbReference type="PDB" id="5E7K">
    <property type="method" value="X-ray"/>
    <property type="resolution" value="3.20 A"/>
    <property type="chains" value="31/39=1-210"/>
</dbReference>
<dbReference type="PDB" id="5E81">
    <property type="method" value="X-ray"/>
    <property type="resolution" value="2.95 A"/>
    <property type="chains" value="31/39=1-210"/>
</dbReference>
<dbReference type="PDB" id="5EL4">
    <property type="method" value="X-ray"/>
    <property type="resolution" value="3.15 A"/>
    <property type="chains" value="31/39=1-210"/>
</dbReference>
<dbReference type="PDB" id="5EL5">
    <property type="method" value="X-ray"/>
    <property type="resolution" value="3.15 A"/>
    <property type="chains" value="31/39=1-210"/>
</dbReference>
<dbReference type="PDB" id="5EL6">
    <property type="method" value="X-ray"/>
    <property type="resolution" value="3.10 A"/>
    <property type="chains" value="31/39=1-210"/>
</dbReference>
<dbReference type="PDB" id="5EL7">
    <property type="method" value="X-ray"/>
    <property type="resolution" value="3.15 A"/>
    <property type="chains" value="31/39=1-210"/>
</dbReference>
<dbReference type="PDB" id="5F8K">
    <property type="method" value="X-ray"/>
    <property type="resolution" value="2.80 A"/>
    <property type="chains" value="1F/2F=6-208"/>
</dbReference>
<dbReference type="PDB" id="5FDU">
    <property type="method" value="X-ray"/>
    <property type="resolution" value="2.90 A"/>
    <property type="chains" value="1F/2F=6-208"/>
</dbReference>
<dbReference type="PDB" id="5FDV">
    <property type="method" value="X-ray"/>
    <property type="resolution" value="2.80 A"/>
    <property type="chains" value="1F/2F=6-208"/>
</dbReference>
<dbReference type="PDB" id="5HAU">
    <property type="method" value="X-ray"/>
    <property type="resolution" value="3.00 A"/>
    <property type="chains" value="1F/2F=1-210"/>
</dbReference>
<dbReference type="PDB" id="5HCP">
    <property type="method" value="X-ray"/>
    <property type="resolution" value="2.89 A"/>
    <property type="chains" value="1F/2F=1-210"/>
</dbReference>
<dbReference type="PDB" id="5HCQ">
    <property type="method" value="X-ray"/>
    <property type="resolution" value="2.80 A"/>
    <property type="chains" value="1F/2F=1-210"/>
</dbReference>
<dbReference type="PDB" id="5HCR">
    <property type="method" value="X-ray"/>
    <property type="resolution" value="2.80 A"/>
    <property type="chains" value="1F/2F=1-210"/>
</dbReference>
<dbReference type="PDB" id="5HD1">
    <property type="method" value="X-ray"/>
    <property type="resolution" value="2.70 A"/>
    <property type="chains" value="1F/2F=1-210"/>
</dbReference>
<dbReference type="PDB" id="5IB7">
    <property type="method" value="X-ray"/>
    <property type="resolution" value="2.99 A"/>
    <property type="chains" value="31/39=1-210"/>
</dbReference>
<dbReference type="PDB" id="5IB8">
    <property type="method" value="X-ray"/>
    <property type="resolution" value="3.13 A"/>
    <property type="chains" value="31/39=1-210"/>
</dbReference>
<dbReference type="PDB" id="5IBB">
    <property type="method" value="X-ray"/>
    <property type="resolution" value="2.96 A"/>
    <property type="chains" value="31/39=1-210"/>
</dbReference>
<dbReference type="PDB" id="5IMQ">
    <property type="method" value="EM"/>
    <property type="resolution" value="3.80 A"/>
    <property type="chains" value="c=1-210"/>
</dbReference>
<dbReference type="PDB" id="5IMR">
    <property type="method" value="EM"/>
    <property type="chains" value="c=1-210"/>
</dbReference>
<dbReference type="PDB" id="5J30">
    <property type="method" value="X-ray"/>
    <property type="resolution" value="3.20 A"/>
    <property type="chains" value="RF/YF=1-210"/>
</dbReference>
<dbReference type="PDB" id="5J3C">
    <property type="method" value="X-ray"/>
    <property type="resolution" value="3.04 A"/>
    <property type="chains" value="RF/YF=1-210"/>
</dbReference>
<dbReference type="PDB" id="5J4B">
    <property type="method" value="X-ray"/>
    <property type="resolution" value="2.60 A"/>
    <property type="chains" value="1F/2F=1-210"/>
</dbReference>
<dbReference type="PDB" id="5J4C">
    <property type="method" value="X-ray"/>
    <property type="resolution" value="2.80 A"/>
    <property type="chains" value="1F/2F=1-210"/>
</dbReference>
<dbReference type="PDB" id="5J8B">
    <property type="method" value="X-ray"/>
    <property type="resolution" value="2.60 A"/>
    <property type="chains" value="F=1-210"/>
</dbReference>
<dbReference type="PDB" id="5NDJ">
    <property type="method" value="X-ray"/>
    <property type="resolution" value="3.15 A"/>
    <property type="chains" value="31/39=1-210"/>
</dbReference>
<dbReference type="PDB" id="5NDK">
    <property type="method" value="X-ray"/>
    <property type="resolution" value="2.95 A"/>
    <property type="chains" value="31/39=1-210"/>
</dbReference>
<dbReference type="PDB" id="5OT7">
    <property type="method" value="EM"/>
    <property type="resolution" value="3.80 A"/>
    <property type="chains" value="i=1-208"/>
</dbReference>
<dbReference type="PDB" id="5UQ7">
    <property type="method" value="EM"/>
    <property type="resolution" value="3.50 A"/>
    <property type="chains" value="F=6-208"/>
</dbReference>
<dbReference type="PDB" id="5UQ8">
    <property type="method" value="EM"/>
    <property type="resolution" value="3.20 A"/>
    <property type="chains" value="F=6-208"/>
</dbReference>
<dbReference type="PDB" id="5V8I">
    <property type="method" value="X-ray"/>
    <property type="resolution" value="3.25 A"/>
    <property type="chains" value="1F/2F=1-210"/>
</dbReference>
<dbReference type="PDB" id="5VP2">
    <property type="method" value="X-ray"/>
    <property type="resolution" value="2.80 A"/>
    <property type="chains" value="1F/2F=1-210"/>
</dbReference>
<dbReference type="PDB" id="5VPO">
    <property type="method" value="X-ray"/>
    <property type="resolution" value="3.34 A"/>
    <property type="chains" value="RF/YF=1-210"/>
</dbReference>
<dbReference type="PDB" id="5VPP">
    <property type="method" value="X-ray"/>
    <property type="resolution" value="3.90 A"/>
    <property type="chains" value="RF/YF=1-210"/>
</dbReference>
<dbReference type="PDB" id="5W4K">
    <property type="method" value="X-ray"/>
    <property type="resolution" value="2.70 A"/>
    <property type="chains" value="1F/2F=1-210"/>
</dbReference>
<dbReference type="PDB" id="5WIS">
    <property type="method" value="X-ray"/>
    <property type="resolution" value="2.70 A"/>
    <property type="chains" value="1F/2F=1-210"/>
</dbReference>
<dbReference type="PDB" id="5WIT">
    <property type="method" value="X-ray"/>
    <property type="resolution" value="2.60 A"/>
    <property type="chains" value="1F/2F=1-210"/>
</dbReference>
<dbReference type="PDB" id="5ZLU">
    <property type="method" value="EM"/>
    <property type="resolution" value="3.60 A"/>
    <property type="chains" value="b=1-210"/>
</dbReference>
<dbReference type="PDB" id="6BUW">
    <property type="method" value="X-ray"/>
    <property type="resolution" value="3.50 A"/>
    <property type="chains" value="RF/YF=1-210"/>
</dbReference>
<dbReference type="PDB" id="6BZ6">
    <property type="method" value="X-ray"/>
    <property type="resolution" value="3.18 A"/>
    <property type="chains" value="RF/YF=1-210"/>
</dbReference>
<dbReference type="PDB" id="6BZ7">
    <property type="method" value="X-ray"/>
    <property type="resolution" value="3.68 A"/>
    <property type="chains" value="RF/YF=1-210"/>
</dbReference>
<dbReference type="PDB" id="6BZ8">
    <property type="method" value="X-ray"/>
    <property type="resolution" value="3.74 A"/>
    <property type="chains" value="RF/YF=1-210"/>
</dbReference>
<dbReference type="PDB" id="6C5L">
    <property type="method" value="X-ray"/>
    <property type="resolution" value="3.20 A"/>
    <property type="chains" value="BF/DF=1-210"/>
</dbReference>
<dbReference type="PDB" id="6CAE">
    <property type="method" value="X-ray"/>
    <property type="resolution" value="2.60 A"/>
    <property type="chains" value="1F/2F=1-210"/>
</dbReference>
<dbReference type="PDB" id="6CFJ">
    <property type="method" value="X-ray"/>
    <property type="resolution" value="2.80 A"/>
    <property type="chains" value="1F/2F=1-210"/>
</dbReference>
<dbReference type="PDB" id="6CFK">
    <property type="method" value="X-ray"/>
    <property type="resolution" value="2.70 A"/>
    <property type="chains" value="1F/2F=1-210"/>
</dbReference>
<dbReference type="PDB" id="6CFL">
    <property type="method" value="X-ray"/>
    <property type="resolution" value="2.60 A"/>
    <property type="chains" value="1F/2F=1-210"/>
</dbReference>
<dbReference type="PDB" id="6CZR">
    <property type="method" value="X-ray"/>
    <property type="resolution" value="3.14 A"/>
    <property type="chains" value="1F/2F=6-208"/>
</dbReference>
<dbReference type="PDB" id="6FKR">
    <property type="method" value="X-ray"/>
    <property type="resolution" value="3.20 A"/>
    <property type="chains" value="1F/2F=6-208"/>
</dbReference>
<dbReference type="PDB" id="6GSJ">
    <property type="method" value="X-ray"/>
    <property type="resolution" value="2.96 A"/>
    <property type="chains" value="31/39=1-210"/>
</dbReference>
<dbReference type="PDB" id="6GSK">
    <property type="method" value="X-ray"/>
    <property type="resolution" value="3.36 A"/>
    <property type="chains" value="31/39=1-210"/>
</dbReference>
<dbReference type="PDB" id="6GSL">
    <property type="method" value="X-ray"/>
    <property type="resolution" value="3.16 A"/>
    <property type="chains" value="31/39=1-210"/>
</dbReference>
<dbReference type="PDB" id="6GZQ">
    <property type="method" value="EM"/>
    <property type="resolution" value="3.28 A"/>
    <property type="chains" value="E1=1-208"/>
</dbReference>
<dbReference type="PDB" id="6GZX">
    <property type="method" value="EM"/>
    <property type="resolution" value="4.57 A"/>
    <property type="chains" value="E1/E2=1-208"/>
</dbReference>
<dbReference type="PDB" id="6GZZ">
    <property type="method" value="EM"/>
    <property type="resolution" value="4.13 A"/>
    <property type="chains" value="E1/E2=1-208"/>
</dbReference>
<dbReference type="PDB" id="6N9E">
    <property type="method" value="X-ray"/>
    <property type="resolution" value="3.70 A"/>
    <property type="chains" value="1F/2F=1-210"/>
</dbReference>
<dbReference type="PDB" id="6N9F">
    <property type="method" value="X-ray"/>
    <property type="resolution" value="3.70 A"/>
    <property type="chains" value="1F/2F=1-210"/>
</dbReference>
<dbReference type="PDB" id="6ND5">
    <property type="method" value="X-ray"/>
    <property type="resolution" value="2.60 A"/>
    <property type="chains" value="1F/2F=1-210"/>
</dbReference>
<dbReference type="PDB" id="6ND6">
    <property type="method" value="X-ray"/>
    <property type="resolution" value="2.85 A"/>
    <property type="chains" value="1F/2F=1-210"/>
</dbReference>
<dbReference type="PDB" id="6NDK">
    <property type="method" value="X-ray"/>
    <property type="resolution" value="3.64 A"/>
    <property type="chains" value="RF/YF=1-210"/>
</dbReference>
<dbReference type="PDB" id="6NSH">
    <property type="method" value="X-ray"/>
    <property type="resolution" value="3.40 A"/>
    <property type="chains" value="RF/YF=1-210"/>
</dbReference>
<dbReference type="PDB" id="6NTA">
    <property type="method" value="X-ray"/>
    <property type="resolution" value="3.10 A"/>
    <property type="chains" value="RF/YF=1-210"/>
</dbReference>
<dbReference type="PDB" id="6NUO">
    <property type="method" value="X-ray"/>
    <property type="resolution" value="3.20 A"/>
    <property type="chains" value="RF/YF=1-210"/>
</dbReference>
<dbReference type="PDB" id="6NWY">
    <property type="method" value="X-ray"/>
    <property type="resolution" value="3.50 A"/>
    <property type="chains" value="RF/YF=1-210"/>
</dbReference>
<dbReference type="PDB" id="6O3M">
    <property type="method" value="X-ray"/>
    <property type="resolution" value="3.97 A"/>
    <property type="chains" value="RF/YF=1-210"/>
</dbReference>
<dbReference type="PDB" id="6O97">
    <property type="method" value="X-ray"/>
    <property type="resolution" value="2.75 A"/>
    <property type="chains" value="1F/2F=1-210"/>
</dbReference>
<dbReference type="PDB" id="6OF1">
    <property type="method" value="X-ray"/>
    <property type="resolution" value="2.80 A"/>
    <property type="chains" value="1F/2F=1-210"/>
</dbReference>
<dbReference type="PDB" id="6OF6">
    <property type="method" value="X-ray"/>
    <property type="resolution" value="3.20 A"/>
    <property type="chains" value="RF/YF=1-210"/>
</dbReference>
<dbReference type="PDB" id="6OJ2">
    <property type="method" value="X-ray"/>
    <property type="resolution" value="3.20 A"/>
    <property type="chains" value="RF/YF=1-210"/>
</dbReference>
<dbReference type="PDB" id="6OPE">
    <property type="method" value="X-ray"/>
    <property type="resolution" value="3.10 A"/>
    <property type="chains" value="RF/YF=1-210"/>
</dbReference>
<dbReference type="PDB" id="6ORD">
    <property type="method" value="X-ray"/>
    <property type="resolution" value="3.10 A"/>
    <property type="chains" value="RF/YF=1-210"/>
</dbReference>
<dbReference type="PDB" id="6OSI">
    <property type="method" value="X-ray"/>
    <property type="resolution" value="4.14 A"/>
    <property type="chains" value="RF/YF=1-210"/>
</dbReference>
<dbReference type="PDB" id="6OTR">
    <property type="method" value="X-ray"/>
    <property type="resolution" value="3.12 A"/>
    <property type="chains" value="RF/YF=1-210"/>
</dbReference>
<dbReference type="PDB" id="6OXA">
    <property type="method" value="X-ray"/>
    <property type="resolution" value="3.25 A"/>
    <property type="chains" value="RF/YF=1-210"/>
</dbReference>
<dbReference type="PDB" id="6OXI">
    <property type="method" value="X-ray"/>
    <property type="resolution" value="3.50 A"/>
    <property type="chains" value="RF/YF=1-210"/>
</dbReference>
<dbReference type="PDB" id="6Q95">
    <property type="method" value="EM"/>
    <property type="resolution" value="3.70 A"/>
    <property type="chains" value="D=1-208"/>
</dbReference>
<dbReference type="PDB" id="6QNQ">
    <property type="method" value="X-ray"/>
    <property type="resolution" value="3.50 A"/>
    <property type="chains" value="31/39=1-210"/>
</dbReference>
<dbReference type="PDB" id="6QNR">
    <property type="method" value="X-ray"/>
    <property type="resolution" value="3.10 A"/>
    <property type="chains" value="31/39=1-210"/>
</dbReference>
<dbReference type="PDB" id="6UCQ">
    <property type="method" value="X-ray"/>
    <property type="resolution" value="3.50 A"/>
    <property type="chains" value="1F/2F=1-210"/>
</dbReference>
<dbReference type="PDB" id="6UO1">
    <property type="method" value="X-ray"/>
    <property type="resolution" value="2.95 A"/>
    <property type="chains" value="1F/2F=1-210"/>
</dbReference>
<dbReference type="PDB" id="6XHV">
    <property type="method" value="X-ray"/>
    <property type="resolution" value="2.40 A"/>
    <property type="chains" value="1F/2F=1-210"/>
</dbReference>
<dbReference type="PDB" id="6XHW">
    <property type="method" value="X-ray"/>
    <property type="resolution" value="2.50 A"/>
    <property type="chains" value="1F/2F=1-210"/>
</dbReference>
<dbReference type="PDB" id="6XHX">
    <property type="method" value="X-ray"/>
    <property type="resolution" value="2.55 A"/>
    <property type="chains" value="1F/2F=1-210"/>
</dbReference>
<dbReference type="PDB" id="6XHY">
    <property type="method" value="X-ray"/>
    <property type="resolution" value="2.60 A"/>
    <property type="chains" value="1F/2F=1-210"/>
</dbReference>
<dbReference type="PDB" id="6XQD">
    <property type="method" value="X-ray"/>
    <property type="resolution" value="2.80 A"/>
    <property type="chains" value="1F/2F=1-210"/>
</dbReference>
<dbReference type="PDB" id="6XQE">
    <property type="method" value="X-ray"/>
    <property type="resolution" value="3.00 A"/>
    <property type="chains" value="1F/2F=1-210"/>
</dbReference>
<dbReference type="PDB" id="7AZO">
    <property type="method" value="X-ray"/>
    <property type="resolution" value="3.30 A"/>
    <property type="chains" value="L4A/L4B=1-210"/>
</dbReference>
<dbReference type="PDB" id="7AZS">
    <property type="method" value="X-ray"/>
    <property type="resolution" value="3.10 A"/>
    <property type="chains" value="L4A/L4B=1-210"/>
</dbReference>
<dbReference type="PDB" id="7JQL">
    <property type="method" value="X-ray"/>
    <property type="resolution" value="3.00 A"/>
    <property type="chains" value="1F/2F=1-210"/>
</dbReference>
<dbReference type="PDB" id="7JQM">
    <property type="method" value="X-ray"/>
    <property type="resolution" value="3.05 A"/>
    <property type="chains" value="1F/2F=1-210"/>
</dbReference>
<dbReference type="PDB" id="7LH5">
    <property type="method" value="X-ray"/>
    <property type="resolution" value="3.27 A"/>
    <property type="chains" value="BF/DF=1-210"/>
</dbReference>
<dbReference type="PDB" id="7MD7">
    <property type="method" value="X-ray"/>
    <property type="resolution" value="2.80 A"/>
    <property type="chains" value="1F/2F=1-210"/>
</dbReference>
<dbReference type="PDB" id="7RQ8">
    <property type="method" value="X-ray"/>
    <property type="resolution" value="2.50 A"/>
    <property type="chains" value="1F/2F=1-210"/>
</dbReference>
<dbReference type="PDB" id="7RQ9">
    <property type="method" value="X-ray"/>
    <property type="resolution" value="2.60 A"/>
    <property type="chains" value="1F/2F=1-210"/>
</dbReference>
<dbReference type="PDB" id="7RQA">
    <property type="method" value="X-ray"/>
    <property type="resolution" value="2.40 A"/>
    <property type="chains" value="1F/2F=1-210"/>
</dbReference>
<dbReference type="PDB" id="7RQB">
    <property type="method" value="X-ray"/>
    <property type="resolution" value="2.45 A"/>
    <property type="chains" value="1F/2F=1-210"/>
</dbReference>
<dbReference type="PDB" id="7RQC">
    <property type="method" value="X-ray"/>
    <property type="resolution" value="2.50 A"/>
    <property type="chains" value="1F/2F=1-210"/>
</dbReference>
<dbReference type="PDB" id="7RQD">
    <property type="method" value="X-ray"/>
    <property type="resolution" value="2.50 A"/>
    <property type="chains" value="1F/2F=1-210"/>
</dbReference>
<dbReference type="PDB" id="7RQE">
    <property type="method" value="X-ray"/>
    <property type="resolution" value="2.40 A"/>
    <property type="chains" value="1F/2F=1-210"/>
</dbReference>
<dbReference type="PDB" id="7U2H">
    <property type="method" value="X-ray"/>
    <property type="resolution" value="2.55 A"/>
    <property type="chains" value="1F/2F=1-210"/>
</dbReference>
<dbReference type="PDB" id="7U2I">
    <property type="method" value="X-ray"/>
    <property type="resolution" value="2.55 A"/>
    <property type="chains" value="1F/2F=1-210"/>
</dbReference>
<dbReference type="PDB" id="7U2J">
    <property type="method" value="X-ray"/>
    <property type="resolution" value="2.55 A"/>
    <property type="chains" value="1F/2F=1-210"/>
</dbReference>
<dbReference type="PDB" id="8CVJ">
    <property type="method" value="X-ray"/>
    <property type="resolution" value="2.40 A"/>
    <property type="chains" value="1F/2F=1-210"/>
</dbReference>
<dbReference type="PDB" id="8CVK">
    <property type="method" value="X-ray"/>
    <property type="resolution" value="2.50 A"/>
    <property type="chains" value="1F/2F=1-210"/>
</dbReference>
<dbReference type="PDB" id="8CVL">
    <property type="method" value="X-ray"/>
    <property type="resolution" value="2.30 A"/>
    <property type="chains" value="1F/2F=1-210"/>
</dbReference>
<dbReference type="PDB" id="8EKB">
    <property type="method" value="X-ray"/>
    <property type="resolution" value="2.70 A"/>
    <property type="chains" value="1F/2F=1-210"/>
</dbReference>
<dbReference type="PDB" id="8EV6">
    <property type="method" value="X-ray"/>
    <property type="resolution" value="2.95 A"/>
    <property type="chains" value="1F/2F=1-210"/>
</dbReference>
<dbReference type="PDB" id="8EV7">
    <property type="method" value="X-ray"/>
    <property type="resolution" value="2.89 A"/>
    <property type="chains" value="1F/2F=1-210"/>
</dbReference>
<dbReference type="PDB" id="8FC1">
    <property type="method" value="X-ray"/>
    <property type="resolution" value="2.50 A"/>
    <property type="chains" value="1F/2F=1-210"/>
</dbReference>
<dbReference type="PDB" id="8FC2">
    <property type="method" value="X-ray"/>
    <property type="resolution" value="2.50 A"/>
    <property type="chains" value="1F/2F=1-210"/>
</dbReference>
<dbReference type="PDB" id="8FC3">
    <property type="method" value="X-ray"/>
    <property type="resolution" value="2.60 A"/>
    <property type="chains" value="1F/2F=1-210"/>
</dbReference>
<dbReference type="PDB" id="8FC4">
    <property type="method" value="X-ray"/>
    <property type="resolution" value="2.45 A"/>
    <property type="chains" value="1F/2F=1-210"/>
</dbReference>
<dbReference type="PDB" id="8FC5">
    <property type="method" value="X-ray"/>
    <property type="resolution" value="2.65 A"/>
    <property type="chains" value="1F/2F=1-210"/>
</dbReference>
<dbReference type="PDB" id="8FC6">
    <property type="method" value="X-ray"/>
    <property type="resolution" value="2.35 A"/>
    <property type="chains" value="1F/2F=1-210"/>
</dbReference>
<dbReference type="PDB" id="8FOM">
    <property type="method" value="X-ray"/>
    <property type="resolution" value="3.58 A"/>
    <property type="chains" value="RF/YF=1-210"/>
</dbReference>
<dbReference type="PDB" id="8FON">
    <property type="method" value="X-ray"/>
    <property type="resolution" value="3.64 A"/>
    <property type="chains" value="RF/YF=1-210"/>
</dbReference>
<dbReference type="PDB" id="8G29">
    <property type="method" value="X-ray"/>
    <property type="resolution" value="2.55 A"/>
    <property type="chains" value="1F/2F=1-210"/>
</dbReference>
<dbReference type="PDB" id="8G2A">
    <property type="method" value="X-ray"/>
    <property type="resolution" value="2.45 A"/>
    <property type="chains" value="1F/2F=1-210"/>
</dbReference>
<dbReference type="PDB" id="8G2B">
    <property type="method" value="X-ray"/>
    <property type="resolution" value="2.55 A"/>
    <property type="chains" value="1F/2F=1-210"/>
</dbReference>
<dbReference type="PDB" id="8G2C">
    <property type="method" value="X-ray"/>
    <property type="resolution" value="2.65 A"/>
    <property type="chains" value="1F/2F=1-210"/>
</dbReference>
<dbReference type="PDB" id="8G2D">
    <property type="method" value="X-ray"/>
    <property type="resolution" value="2.70 A"/>
    <property type="chains" value="1F/2F=1-210"/>
</dbReference>
<dbReference type="PDB" id="8T8B">
    <property type="method" value="X-ray"/>
    <property type="resolution" value="2.65 A"/>
    <property type="chains" value="1F/2F=1-210"/>
</dbReference>
<dbReference type="PDB" id="8T8C">
    <property type="method" value="X-ray"/>
    <property type="resolution" value="2.60 A"/>
    <property type="chains" value="1F/2F=1-210"/>
</dbReference>
<dbReference type="PDB" id="8UD6">
    <property type="method" value="X-ray"/>
    <property type="resolution" value="2.70 A"/>
    <property type="chains" value="1F/2F=1-210"/>
</dbReference>
<dbReference type="PDB" id="8UD7">
    <property type="method" value="X-ray"/>
    <property type="resolution" value="2.55 A"/>
    <property type="chains" value="1F/2F=1-210"/>
</dbReference>
<dbReference type="PDB" id="8UD8">
    <property type="method" value="X-ray"/>
    <property type="resolution" value="2.60 A"/>
    <property type="chains" value="1F/2F=1-210"/>
</dbReference>
<dbReference type="PDB" id="8UVR">
    <property type="method" value="X-ray"/>
    <property type="resolution" value="2.60 A"/>
    <property type="chains" value="1F/2F=1-210"/>
</dbReference>
<dbReference type="PDB" id="8UVS">
    <property type="method" value="X-ray"/>
    <property type="resolution" value="2.75 A"/>
    <property type="chains" value="1F/2F=1-210"/>
</dbReference>
<dbReference type="PDB" id="8VTU">
    <property type="method" value="X-ray"/>
    <property type="resolution" value="2.40 A"/>
    <property type="chains" value="1F/2F=1-210"/>
</dbReference>
<dbReference type="PDB" id="8VTV">
    <property type="method" value="X-ray"/>
    <property type="resolution" value="2.55 A"/>
    <property type="chains" value="1F/2F=1-210"/>
</dbReference>
<dbReference type="PDB" id="8VTW">
    <property type="method" value="X-ray"/>
    <property type="resolution" value="2.35 A"/>
    <property type="chains" value="1F/2F=1-210"/>
</dbReference>
<dbReference type="PDB" id="8VTX">
    <property type="method" value="X-ray"/>
    <property type="resolution" value="2.40 A"/>
    <property type="chains" value="1F/2F=1-210"/>
</dbReference>
<dbReference type="PDB" id="8VTY">
    <property type="method" value="X-ray"/>
    <property type="resolution" value="2.60 A"/>
    <property type="chains" value="1F/2F=1-210"/>
</dbReference>
<dbReference type="PDB" id="8WV1">
    <property type="method" value="X-ray"/>
    <property type="resolution" value="3.99 A"/>
    <property type="chains" value="E/e=1-210"/>
</dbReference>
<dbReference type="PDB" id="9B00">
    <property type="method" value="X-ray"/>
    <property type="resolution" value="2.80 A"/>
    <property type="chains" value="1F/2F=1-210"/>
</dbReference>
<dbReference type="PDB" id="9D0J">
    <property type="method" value="X-ray"/>
    <property type="resolution" value="2.50 A"/>
    <property type="chains" value="1F/2F=1-210"/>
</dbReference>
<dbReference type="PDB" id="9D7R">
    <property type="method" value="X-ray"/>
    <property type="resolution" value="2.70 A"/>
    <property type="chains" value="1F/2F=1-210"/>
</dbReference>
<dbReference type="PDB" id="9D7S">
    <property type="method" value="X-ray"/>
    <property type="resolution" value="2.85 A"/>
    <property type="chains" value="1F/2F=1-210"/>
</dbReference>
<dbReference type="PDB" id="9D7T">
    <property type="method" value="X-ray"/>
    <property type="resolution" value="2.70 A"/>
    <property type="chains" value="1F/2F=1-210"/>
</dbReference>
<dbReference type="PDB" id="9DFC">
    <property type="method" value="X-ray"/>
    <property type="resolution" value="2.50 A"/>
    <property type="chains" value="1F/2F=1-210"/>
</dbReference>
<dbReference type="PDB" id="9DFD">
    <property type="method" value="X-ray"/>
    <property type="resolution" value="2.60 A"/>
    <property type="chains" value="1F/2F=1-210"/>
</dbReference>
<dbReference type="PDB" id="9DFE">
    <property type="method" value="X-ray"/>
    <property type="resolution" value="2.60 A"/>
    <property type="chains" value="1F/2F=1-210"/>
</dbReference>
<dbReference type="PDBsum" id="1VVJ"/>
<dbReference type="PDBsum" id="1VY4"/>
<dbReference type="PDBsum" id="1VY5"/>
<dbReference type="PDBsum" id="1VY6"/>
<dbReference type="PDBsum" id="1VY7"/>
<dbReference type="PDBsum" id="4L47"/>
<dbReference type="PDBsum" id="4L71"/>
<dbReference type="PDBsum" id="4LEL"/>
<dbReference type="PDBsum" id="4LFZ"/>
<dbReference type="PDBsum" id="4LNT"/>
<dbReference type="PDBsum" id="4LSK"/>
<dbReference type="PDBsum" id="4LT8"/>
<dbReference type="PDBsum" id="4P6F"/>
<dbReference type="PDBsum" id="4P70"/>
<dbReference type="PDBsum" id="4TUA"/>
<dbReference type="PDBsum" id="4TUB"/>
<dbReference type="PDBsum" id="4TUC"/>
<dbReference type="PDBsum" id="4TUD"/>
<dbReference type="PDBsum" id="4TUE"/>
<dbReference type="PDBsum" id="4V42"/>
<dbReference type="PDBsum" id="4V4P"/>
<dbReference type="PDBsum" id="4V4X"/>
<dbReference type="PDBsum" id="4V4Y"/>
<dbReference type="PDBsum" id="4V4Z"/>
<dbReference type="PDBsum" id="4V51"/>
<dbReference type="PDBsum" id="4V5A"/>
<dbReference type="PDBsum" id="4V5C"/>
<dbReference type="PDBsum" id="4V5D"/>
<dbReference type="PDBsum" id="4V5E"/>
<dbReference type="PDBsum" id="4V5F"/>
<dbReference type="PDBsum" id="4V5G"/>
<dbReference type="PDBsum" id="4V5J"/>
<dbReference type="PDBsum" id="4V5K"/>
<dbReference type="PDBsum" id="4V5L"/>
<dbReference type="PDBsum" id="4V5M"/>
<dbReference type="PDBsum" id="4V5N"/>
<dbReference type="PDBsum" id="4V5P"/>
<dbReference type="PDBsum" id="4V5Q"/>
<dbReference type="PDBsum" id="4V5R"/>
<dbReference type="PDBsum" id="4V5S"/>
<dbReference type="PDBsum" id="4V68"/>
<dbReference type="PDBsum" id="4V6A"/>
<dbReference type="PDBsum" id="4V6F"/>
<dbReference type="PDBsum" id="4V6G"/>
<dbReference type="PDBsum" id="4V7J"/>
<dbReference type="PDBsum" id="4V7K"/>
<dbReference type="PDBsum" id="4V7L"/>
<dbReference type="PDBsum" id="4V7M"/>
<dbReference type="PDBsum" id="4V7W"/>
<dbReference type="PDBsum" id="4V7X"/>
<dbReference type="PDBsum" id="4V7Y"/>
<dbReference type="PDBsum" id="4V7Z"/>
<dbReference type="PDBsum" id="4V87"/>
<dbReference type="PDBsum" id="4V8A"/>
<dbReference type="PDBsum" id="4V8B"/>
<dbReference type="PDBsum" id="4V8C"/>
<dbReference type="PDBsum" id="4V8D"/>
<dbReference type="PDBsum" id="4V8E"/>
<dbReference type="PDBsum" id="4V8F"/>
<dbReference type="PDBsum" id="4V8G"/>
<dbReference type="PDBsum" id="4V8H"/>
<dbReference type="PDBsum" id="4V8I"/>
<dbReference type="PDBsum" id="4V8J"/>
<dbReference type="PDBsum" id="4V8N"/>
<dbReference type="PDBsum" id="4V8O"/>
<dbReference type="PDBsum" id="4V8Q"/>
<dbReference type="PDBsum" id="4V8U"/>
<dbReference type="PDBsum" id="4V8X"/>
<dbReference type="PDBsum" id="4V90"/>
<dbReference type="PDBsum" id="4V95"/>
<dbReference type="PDBsum" id="4V97"/>
<dbReference type="PDBsum" id="4V9A"/>
<dbReference type="PDBsum" id="4V9B"/>
<dbReference type="PDBsum" id="4V9H"/>
<dbReference type="PDBsum" id="4V9I"/>
<dbReference type="PDBsum" id="4V9R"/>
<dbReference type="PDBsum" id="4V9S"/>
<dbReference type="PDBsum" id="4W2E"/>
<dbReference type="PDBsum" id="4W2F"/>
<dbReference type="PDBsum" id="4W2G"/>
<dbReference type="PDBsum" id="4W2H"/>
<dbReference type="PDBsum" id="4W2I"/>
<dbReference type="PDBsum" id="4W4G"/>
<dbReference type="PDBsum" id="4WPO"/>
<dbReference type="PDBsum" id="4WQ1"/>
<dbReference type="PDBsum" id="4WQF"/>
<dbReference type="PDBsum" id="4WQR"/>
<dbReference type="PDBsum" id="4WQU"/>
<dbReference type="PDBsum" id="4WQY"/>
<dbReference type="PDBsum" id="4WR6"/>
<dbReference type="PDBsum" id="4WRA"/>
<dbReference type="PDBsum" id="4WRO"/>
<dbReference type="PDBsum" id="4WSD"/>
<dbReference type="PDBsum" id="4WSM"/>
<dbReference type="PDBsum" id="4WT1"/>
<dbReference type="PDBsum" id="4WT8"/>
<dbReference type="PDBsum" id="4WU1"/>
<dbReference type="PDBsum" id="4WZD"/>
<dbReference type="PDBsum" id="4WZO"/>
<dbReference type="PDBsum" id="4Y4O"/>
<dbReference type="PDBsum" id="4Y4P"/>
<dbReference type="PDBsum" id="4YPB"/>
<dbReference type="PDBsum" id="4YZV"/>
<dbReference type="PDBsum" id="4Z3S"/>
<dbReference type="PDBsum" id="4Z8C"/>
<dbReference type="PDBsum" id="4ZER"/>
<dbReference type="PDBsum" id="4ZSN"/>
<dbReference type="PDBsum" id="5A9Z"/>
<dbReference type="PDBsum" id="5AA0"/>
<dbReference type="PDBsum" id="5CZP"/>
<dbReference type="PDBsum" id="5D8B"/>
<dbReference type="PDBsum" id="5DFE"/>
<dbReference type="PDBsum" id="5DOX"/>
<dbReference type="PDBsum" id="5DOY"/>
<dbReference type="PDBsum" id="5E7K"/>
<dbReference type="PDBsum" id="5E81"/>
<dbReference type="PDBsum" id="5EL4"/>
<dbReference type="PDBsum" id="5EL5"/>
<dbReference type="PDBsum" id="5EL6"/>
<dbReference type="PDBsum" id="5EL7"/>
<dbReference type="PDBsum" id="5F8K"/>
<dbReference type="PDBsum" id="5FDU"/>
<dbReference type="PDBsum" id="5FDV"/>
<dbReference type="PDBsum" id="5HAU"/>
<dbReference type="PDBsum" id="5HCP"/>
<dbReference type="PDBsum" id="5HCQ"/>
<dbReference type="PDBsum" id="5HCR"/>
<dbReference type="PDBsum" id="5HD1"/>
<dbReference type="PDBsum" id="5IB7"/>
<dbReference type="PDBsum" id="5IB8"/>
<dbReference type="PDBsum" id="5IBB"/>
<dbReference type="PDBsum" id="5IMQ"/>
<dbReference type="PDBsum" id="5IMR"/>
<dbReference type="PDBsum" id="5J30"/>
<dbReference type="PDBsum" id="5J3C"/>
<dbReference type="PDBsum" id="5J4B"/>
<dbReference type="PDBsum" id="5J4C"/>
<dbReference type="PDBsum" id="5J8B"/>
<dbReference type="PDBsum" id="5NDJ"/>
<dbReference type="PDBsum" id="5NDK"/>
<dbReference type="PDBsum" id="5OT7"/>
<dbReference type="PDBsum" id="5UQ7"/>
<dbReference type="PDBsum" id="5UQ8"/>
<dbReference type="PDBsum" id="5V8I"/>
<dbReference type="PDBsum" id="5VP2"/>
<dbReference type="PDBsum" id="5VPO"/>
<dbReference type="PDBsum" id="5VPP"/>
<dbReference type="PDBsum" id="5W4K"/>
<dbReference type="PDBsum" id="5WIS"/>
<dbReference type="PDBsum" id="5WIT"/>
<dbReference type="PDBsum" id="5ZLU"/>
<dbReference type="PDBsum" id="6BUW"/>
<dbReference type="PDBsum" id="6BZ6"/>
<dbReference type="PDBsum" id="6BZ7"/>
<dbReference type="PDBsum" id="6BZ8"/>
<dbReference type="PDBsum" id="6C5L"/>
<dbReference type="PDBsum" id="6CAE"/>
<dbReference type="PDBsum" id="6CFJ"/>
<dbReference type="PDBsum" id="6CFK"/>
<dbReference type="PDBsum" id="6CFL"/>
<dbReference type="PDBsum" id="6CZR"/>
<dbReference type="PDBsum" id="6FKR"/>
<dbReference type="PDBsum" id="6GSJ"/>
<dbReference type="PDBsum" id="6GSK"/>
<dbReference type="PDBsum" id="6GSL"/>
<dbReference type="PDBsum" id="6GZQ"/>
<dbReference type="PDBsum" id="6GZX"/>
<dbReference type="PDBsum" id="6GZZ"/>
<dbReference type="PDBsum" id="6N9E"/>
<dbReference type="PDBsum" id="6N9F"/>
<dbReference type="PDBsum" id="6ND5"/>
<dbReference type="PDBsum" id="6ND6"/>
<dbReference type="PDBsum" id="6NDK"/>
<dbReference type="PDBsum" id="6NSH"/>
<dbReference type="PDBsum" id="6NTA"/>
<dbReference type="PDBsum" id="6NUO"/>
<dbReference type="PDBsum" id="6NWY"/>
<dbReference type="PDBsum" id="6O3M"/>
<dbReference type="PDBsum" id="6O97"/>
<dbReference type="PDBsum" id="6OF1"/>
<dbReference type="PDBsum" id="6OF6"/>
<dbReference type="PDBsum" id="6OJ2"/>
<dbReference type="PDBsum" id="6OPE"/>
<dbReference type="PDBsum" id="6ORD"/>
<dbReference type="PDBsum" id="6OSI"/>
<dbReference type="PDBsum" id="6OTR"/>
<dbReference type="PDBsum" id="6OXA"/>
<dbReference type="PDBsum" id="6OXI"/>
<dbReference type="PDBsum" id="6Q95"/>
<dbReference type="PDBsum" id="6QNQ"/>
<dbReference type="PDBsum" id="6QNR"/>
<dbReference type="PDBsum" id="6UCQ"/>
<dbReference type="PDBsum" id="6UO1"/>
<dbReference type="PDBsum" id="6XHV"/>
<dbReference type="PDBsum" id="6XHW"/>
<dbReference type="PDBsum" id="6XHX"/>
<dbReference type="PDBsum" id="6XHY"/>
<dbReference type="PDBsum" id="6XQD"/>
<dbReference type="PDBsum" id="6XQE"/>
<dbReference type="PDBsum" id="7AZO"/>
<dbReference type="PDBsum" id="7AZS"/>
<dbReference type="PDBsum" id="7JQL"/>
<dbReference type="PDBsum" id="7JQM"/>
<dbReference type="PDBsum" id="7LH5"/>
<dbReference type="PDBsum" id="7MD7"/>
<dbReference type="PDBsum" id="7RQ8"/>
<dbReference type="PDBsum" id="7RQ9"/>
<dbReference type="PDBsum" id="7RQA"/>
<dbReference type="PDBsum" id="7RQB"/>
<dbReference type="PDBsum" id="7RQC"/>
<dbReference type="PDBsum" id="7RQD"/>
<dbReference type="PDBsum" id="7RQE"/>
<dbReference type="PDBsum" id="7U2H"/>
<dbReference type="PDBsum" id="7U2I"/>
<dbReference type="PDBsum" id="7U2J"/>
<dbReference type="PDBsum" id="8CVJ"/>
<dbReference type="PDBsum" id="8CVK"/>
<dbReference type="PDBsum" id="8CVL"/>
<dbReference type="PDBsum" id="8EKB"/>
<dbReference type="PDBsum" id="8EV6"/>
<dbReference type="PDBsum" id="8EV7"/>
<dbReference type="PDBsum" id="8FC1"/>
<dbReference type="PDBsum" id="8FC2"/>
<dbReference type="PDBsum" id="8FC3"/>
<dbReference type="PDBsum" id="8FC4"/>
<dbReference type="PDBsum" id="8FC5"/>
<dbReference type="PDBsum" id="8FC6"/>
<dbReference type="PDBsum" id="8FOM"/>
<dbReference type="PDBsum" id="8FON"/>
<dbReference type="PDBsum" id="8G29"/>
<dbReference type="PDBsum" id="8G2A"/>
<dbReference type="PDBsum" id="8G2B"/>
<dbReference type="PDBsum" id="8G2C"/>
<dbReference type="PDBsum" id="8G2D"/>
<dbReference type="PDBsum" id="8T8B"/>
<dbReference type="PDBsum" id="8T8C"/>
<dbReference type="PDBsum" id="8UD6"/>
<dbReference type="PDBsum" id="8UD7"/>
<dbReference type="PDBsum" id="8UD8"/>
<dbReference type="PDBsum" id="8UVR"/>
<dbReference type="PDBsum" id="8UVS"/>
<dbReference type="PDBsum" id="8VTU"/>
<dbReference type="PDBsum" id="8VTV"/>
<dbReference type="PDBsum" id="8VTW"/>
<dbReference type="PDBsum" id="8VTX"/>
<dbReference type="PDBsum" id="8VTY"/>
<dbReference type="PDBsum" id="8WV1"/>
<dbReference type="PDBsum" id="9B00"/>
<dbReference type="PDBsum" id="9D0J"/>
<dbReference type="PDBsum" id="9D7R"/>
<dbReference type="PDBsum" id="9D7S"/>
<dbReference type="PDBsum" id="9D7T"/>
<dbReference type="PDBsum" id="9DFC"/>
<dbReference type="PDBsum" id="9DFD"/>
<dbReference type="PDBsum" id="9DFE"/>
<dbReference type="EMDB" id="EMD-0101"/>
<dbReference type="EMDB" id="EMD-0104"/>
<dbReference type="EMDB" id="EMD-0105"/>
<dbReference type="EMDB" id="EMD-3852"/>
<dbReference type="EMDB" id="EMD-4475"/>
<dbReference type="EMDB" id="EMD-6934"/>
<dbReference type="EMDB" id="EMD-8596"/>
<dbReference type="EMDB" id="EMD-8597"/>
<dbReference type="SMR" id="Q5SHN9"/>
<dbReference type="IntAct" id="Q5SHN9">
    <property type="interactions" value="8"/>
</dbReference>
<dbReference type="EnsemblBacteria" id="BAD71514">
    <property type="protein sequence ID" value="BAD71514"/>
    <property type="gene ID" value="BAD71514"/>
</dbReference>
<dbReference type="KEGG" id="ttj:TTHA1691"/>
<dbReference type="PATRIC" id="fig|300852.9.peg.1661"/>
<dbReference type="eggNOG" id="COG0088">
    <property type="taxonomic scope" value="Bacteria"/>
</dbReference>
<dbReference type="HOGENOM" id="CLU_041575_5_1_0"/>
<dbReference type="Proteomes" id="UP000000532">
    <property type="component" value="Chromosome"/>
</dbReference>
<dbReference type="GO" id="GO:1990904">
    <property type="term" value="C:ribonucleoprotein complex"/>
    <property type="evidence" value="ECO:0007669"/>
    <property type="project" value="UniProtKB-KW"/>
</dbReference>
<dbReference type="GO" id="GO:0005840">
    <property type="term" value="C:ribosome"/>
    <property type="evidence" value="ECO:0007669"/>
    <property type="project" value="UniProtKB-KW"/>
</dbReference>
<dbReference type="GO" id="GO:0019843">
    <property type="term" value="F:rRNA binding"/>
    <property type="evidence" value="ECO:0007669"/>
    <property type="project" value="UniProtKB-UniRule"/>
</dbReference>
<dbReference type="GO" id="GO:0003735">
    <property type="term" value="F:structural constituent of ribosome"/>
    <property type="evidence" value="ECO:0007669"/>
    <property type="project" value="InterPro"/>
</dbReference>
<dbReference type="GO" id="GO:0006412">
    <property type="term" value="P:translation"/>
    <property type="evidence" value="ECO:0007669"/>
    <property type="project" value="UniProtKB-UniRule"/>
</dbReference>
<dbReference type="Gene3D" id="3.40.1370.10">
    <property type="match status" value="1"/>
</dbReference>
<dbReference type="HAMAP" id="MF_01328_B">
    <property type="entry name" value="Ribosomal_uL4_B"/>
    <property type="match status" value="1"/>
</dbReference>
<dbReference type="InterPro" id="IPR002136">
    <property type="entry name" value="Ribosomal_uL4"/>
</dbReference>
<dbReference type="InterPro" id="IPR013005">
    <property type="entry name" value="Ribosomal_uL4-like"/>
</dbReference>
<dbReference type="InterPro" id="IPR023574">
    <property type="entry name" value="Ribosomal_uL4_dom_sf"/>
</dbReference>
<dbReference type="NCBIfam" id="TIGR03953">
    <property type="entry name" value="rplD_bact"/>
    <property type="match status" value="1"/>
</dbReference>
<dbReference type="PANTHER" id="PTHR10746">
    <property type="entry name" value="50S RIBOSOMAL PROTEIN L4"/>
    <property type="match status" value="1"/>
</dbReference>
<dbReference type="PANTHER" id="PTHR10746:SF6">
    <property type="entry name" value="LARGE RIBOSOMAL SUBUNIT PROTEIN UL4M"/>
    <property type="match status" value="1"/>
</dbReference>
<dbReference type="Pfam" id="PF00573">
    <property type="entry name" value="Ribosomal_L4"/>
    <property type="match status" value="1"/>
</dbReference>
<dbReference type="SUPFAM" id="SSF52166">
    <property type="entry name" value="Ribosomal protein L4"/>
    <property type="match status" value="1"/>
</dbReference>
<name>RL4_THET8</name>
<proteinExistence type="evidence at protein level"/>
<protein>
    <recommendedName>
        <fullName evidence="4">Large ribosomal subunit protein uL4</fullName>
    </recommendedName>
    <alternativeName>
        <fullName>50S ribosomal protein L4</fullName>
    </alternativeName>
    <alternativeName>
        <fullName>L1e</fullName>
    </alternativeName>
</protein>
<feature type="chain" id="PRO_0000129300" description="Large ribosomal subunit protein uL4">
    <location>
        <begin position="1"/>
        <end position="210"/>
    </location>
</feature>
<feature type="mutagenesis site" description="Increases Ptase activity of hybrid ribosomes to a value greater than that of pure E.coli ribosomes. Increases binding of a tRNA analog to the P site." evidence="2">
    <original>G</original>
    <variation>A</variation>
    <location>
        <position position="55"/>
    </location>
</feature>
<feature type="mutagenesis site" description="No effect on Ptase activity of hybrid ribosomes. No change in binding of a tRNA analog to the A or P site." evidence="2">
    <original>G</original>
    <variation>S</variation>
    <location>
        <position position="55"/>
    </location>
</feature>
<feature type="mutagenesis site" description="Further decreases Ptase activity in E.coli hybrid ribosomes. Significantly decreases binding of a tRNA analog to the A or P site." evidence="2">
    <original>E</original>
    <variation>A</variation>
    <location>
        <position position="56"/>
    </location>
</feature>
<feature type="mutagenesis site" description="Restores Ptase activity of hybrid ribosomes to that of pure E.coli ribosomes. Significantly increases binding of a tRNA analog to the P site." evidence="2">
    <original>E</original>
    <variation>Q</variation>
    <location>
        <position position="56"/>
    </location>
</feature>
<feature type="sequence conflict" description="In Ref. 1; AAA97862." evidence="4" ref="1">
    <original>EL</original>
    <variation>DV</variation>
    <location>
        <begin position="19"/>
        <end position="20"/>
    </location>
</feature>
<feature type="strand" evidence="5">
    <location>
        <begin position="10"/>
        <end position="12"/>
    </location>
</feature>
<feature type="turn" evidence="5">
    <location>
        <begin position="22"/>
        <end position="25"/>
    </location>
</feature>
<feature type="helix" evidence="5">
    <location>
        <begin position="30"/>
        <end position="43"/>
    </location>
</feature>
<feature type="turn" evidence="5">
    <location>
        <begin position="54"/>
        <end position="56"/>
    </location>
</feature>
<feature type="strand" evidence="5">
    <location>
        <begin position="57"/>
        <end position="59"/>
    </location>
</feature>
<feature type="strand" evidence="5">
    <location>
        <begin position="83"/>
        <end position="86"/>
    </location>
</feature>
<feature type="helix" evidence="5">
    <location>
        <begin position="103"/>
        <end position="120"/>
    </location>
</feature>
<feature type="strand" evidence="5">
    <location>
        <begin position="123"/>
        <end position="125"/>
    </location>
</feature>
<feature type="helix" evidence="5">
    <location>
        <begin position="136"/>
        <end position="145"/>
    </location>
</feature>
<feature type="strand" evidence="5">
    <location>
        <begin position="150"/>
        <end position="152"/>
    </location>
</feature>
<feature type="strand" evidence="5">
    <location>
        <begin position="154"/>
        <end position="157"/>
    </location>
</feature>
<feature type="helix" evidence="5">
    <location>
        <begin position="161"/>
        <end position="166"/>
    </location>
</feature>
<feature type="strand" evidence="5">
    <location>
        <begin position="167"/>
        <end position="170"/>
    </location>
</feature>
<feature type="strand" evidence="5">
    <location>
        <begin position="173"/>
        <end position="176"/>
    </location>
</feature>
<feature type="helix" evidence="5">
    <location>
        <begin position="178"/>
        <end position="180"/>
    </location>
</feature>
<feature type="helix" evidence="5">
    <location>
        <begin position="183"/>
        <end position="188"/>
    </location>
</feature>
<feature type="strand" evidence="5">
    <location>
        <begin position="189"/>
        <end position="194"/>
    </location>
</feature>
<feature type="helix" evidence="5">
    <location>
        <begin position="196"/>
        <end position="204"/>
    </location>
</feature>
<reference key="1">
    <citation type="journal article" date="1995" name="Gene">
        <title>Direct linkage of str-, S10- and spc-related gene clusters in Thermus thermophilus HB8, and sequences of ribosomal proteins L4 and S10.</title>
        <authorList>
            <person name="Pfeiffer T."/>
            <person name="Jorcke D."/>
            <person name="Feltens R."/>
            <person name="Hartmann R.K."/>
        </authorList>
    </citation>
    <scope>NUCLEOTIDE SEQUENCE [GENOMIC DNA]</scope>
</reference>
<reference key="2">
    <citation type="submission" date="2004-11" db="EMBL/GenBank/DDBJ databases">
        <title>Complete genome sequence of Thermus thermophilus HB8.</title>
        <authorList>
            <person name="Masui R."/>
            <person name="Kurokawa K."/>
            <person name="Nakagawa N."/>
            <person name="Tokunaga F."/>
            <person name="Koyama Y."/>
            <person name="Shibata T."/>
            <person name="Oshima T."/>
            <person name="Yokoyama S."/>
            <person name="Yasunaga T."/>
            <person name="Kuramitsu S."/>
        </authorList>
    </citation>
    <scope>NUCLEOTIDE SEQUENCE [LARGE SCALE GENOMIC DNA]</scope>
    <source>
        <strain>ATCC 27634 / DSM 579 / HB8</strain>
    </source>
</reference>
<reference key="3">
    <citation type="journal article" date="2000" name="Biol. Chem.">
        <title>Identification of the 50S ribosomal proteins from the eubacterium Thermus thermophilus.</title>
        <authorList>
            <person name="Katsani K.R."/>
            <person name="Tsiboli P."/>
            <person name="Anagnostopoulos K."/>
            <person name="Urlaub H."/>
            <person name="Choli-Papadopoulou T."/>
        </authorList>
    </citation>
    <scope>PROTEIN SEQUENCE OF 6-17</scope>
    <scope>BLOCKAGE OF N-TERMINUS</scope>
    <source>
        <strain>ATCC 27634 / DSM 579 / HB8</strain>
    </source>
</reference>
<reference key="4">
    <citation type="journal article" date="2003" name="J. Mol. Biol.">
        <title>On the structural and functional importance of the highly conserved Glu56 of Thermus thermophilus L4 ribosomal protein.</title>
        <authorList>
            <person name="Leontiadou F."/>
            <person name="Xaplanteri M.A."/>
            <person name="Papadopoulos G."/>
            <person name="Gerassimou C."/>
            <person name="Kalpaxis D.L."/>
            <person name="Choli-Papadopoulou T."/>
        </authorList>
    </citation>
    <scope>MUTAGENESIS OF GLY-55 AND GLU-56</scope>
</reference>
<reference key="5">
    <citation type="journal article" date="2005" name="Proteomics">
        <title>Extending ribosomal protein identifications to unsequenced bacterial strains using matrix-assisted laser desorption/ionization mass spectrometry.</title>
        <authorList>
            <person name="Suh M.-J."/>
            <person name="Hamburg D.M."/>
            <person name="Gregory S.T."/>
            <person name="Dahlberg A.E."/>
            <person name="Limbach P.A."/>
        </authorList>
    </citation>
    <scope>MASS SPECTROMETRY</scope>
    <source>
        <strain>ATCC 27634 / DSM 579 / HB8</strain>
    </source>
</reference>
<reference key="6">
    <citation type="journal article" date="2001" name="Cell">
        <title>The path of messenger RNA through the ribosome.</title>
        <authorList>
            <person name="Yusupova G.Z."/>
            <person name="Yusupov M.M."/>
            <person name="Cate J.H.D."/>
            <person name="Noller H.F."/>
        </authorList>
    </citation>
    <scope>X-RAY CRYSTALLOGRAPHY (5.0 ANGSTROMS) OF THE RIBOSOME</scope>
</reference>
<reference key="7">
    <citation type="journal article" date="2001" name="Science">
        <title>Crystal structure of the ribosome at 5.5 A resolution.</title>
        <authorList>
            <person name="Yusupov M.M."/>
            <person name="Yusupova G.Z."/>
            <person name="Baucom A."/>
            <person name="Lieberman K."/>
            <person name="Earnest T.N."/>
            <person name="Cate J.H.D."/>
            <person name="Noller H.F."/>
        </authorList>
    </citation>
    <scope>X-RAY CRYSTALLOGRAPHY (5.5 ANGSTROMS) OF THE RIBOSOME</scope>
</reference>
<reference key="8">
    <citation type="journal article" date="2008" name="Science">
        <title>Insights into translational termination from the structure of RF2 bound to the ribosome.</title>
        <authorList>
            <person name="Weixlbaumer A."/>
            <person name="Jin H."/>
            <person name="Neubauer C."/>
            <person name="Voorhees R.M."/>
            <person name="Petry S."/>
            <person name="Kelley A.C."/>
            <person name="Ramakrishnan V."/>
        </authorList>
    </citation>
    <scope>X-RAY CRYSTALLOGRAPHY (3.45 ANGSTROMS) OF 70S RIBOSOME IN COMPLEX WITH RF2</scope>
    <scope>SUBUNIT</scope>
</reference>
<reference key="9">
    <citation type="journal article" date="2010" name="Proc. Natl. Acad. Sci. U.S.A.">
        <title>Structure of the 70S ribosome bound to release factor 2 and a substrate analog provides insights into catalysis of peptide release.</title>
        <authorList>
            <person name="Jin H."/>
            <person name="Kelley A.C."/>
            <person name="Loakes D."/>
            <person name="Ramakrishnan V."/>
        </authorList>
    </citation>
    <scope>X-RAY CRYSTALLOGRAPHY (3.10 ANGSTROMS) OF 70S RIBOSOME IN COMPLEX WITH RF2</scope>
    <scope>SUBUNIT</scope>
</reference>
<organism>
    <name type="scientific">Thermus thermophilus (strain ATCC 27634 / DSM 579 / HB8)</name>
    <dbReference type="NCBI Taxonomy" id="300852"/>
    <lineage>
        <taxon>Bacteria</taxon>
        <taxon>Thermotogati</taxon>
        <taxon>Deinococcota</taxon>
        <taxon>Deinococci</taxon>
        <taxon>Thermales</taxon>
        <taxon>Thermaceae</taxon>
        <taxon>Thermus</taxon>
    </lineage>
</organism>
<comment type="function">
    <text evidence="1">One of the primary rRNA binding proteins, this protein initially binds near the 5'-end of the 23S rRNA. It is important during the early stages of 50S assembly. It makes multiple contacts with different domains of the 23S rRNA in the assembled 50S subunit and ribosome (By similarity).</text>
</comment>
<comment type="function">
    <text evidence="1">Forms part of the polypeptide exit tunnel.</text>
</comment>
<comment type="function">
    <text>This protein can be incorporated into E.coli ribosomes in vivo, which resulted in decreased peptidyltransferase (Ptase) activity of the hybrid ribosomes. The hybrid 50S subunits associate less well with 30S subunits to form the ribosome.</text>
</comment>
<comment type="subunit">
    <text>Part of the 50S ribosomal subunit.</text>
</comment>
<comment type="PTM">
    <text>The N-terminus is blocked.</text>
</comment>
<comment type="mass spectrometry"/>
<comment type="similarity">
    <text evidence="4">Belongs to the universal ribosomal protein uL4 family.</text>
</comment>
<evidence type="ECO:0000250" key="1"/>
<evidence type="ECO:0000269" key="2">
    <source>
    </source>
</evidence>
<evidence type="ECO:0000269" key="3">
    <source>
    </source>
</evidence>
<evidence type="ECO:0000305" key="4"/>
<evidence type="ECO:0007829" key="5">
    <source>
        <dbReference type="PDB" id="4WT8"/>
    </source>
</evidence>
<sequence>MKEVAVYQIPVLSPSGRRELAADLPAEINPHLLWEVVRWQLAKRRRGTASTKTRGEVAYSGRKIWPQKHTGRARHGDIGAPIFVGGGVVFGPKPRDYSYTLPKKVRKKGLAMAVADRAREGKLLLVEAFAGVNGKTKEFLAWAKEAGLDGSESVLLVTGNELVRRAARNLPWVVTLAPEGLNVYDIVRTERLVMDLDAWEVFQNRIGGEA</sequence>
<keyword id="KW-0002">3D-structure</keyword>
<keyword id="KW-0903">Direct protein sequencing</keyword>
<keyword id="KW-1185">Reference proteome</keyword>
<keyword id="KW-0687">Ribonucleoprotein</keyword>
<keyword id="KW-0689">Ribosomal protein</keyword>
<keyword id="KW-0694">RNA-binding</keyword>
<keyword id="KW-0699">rRNA-binding</keyword>